<feature type="chain" id="PRO_0000319118" description="Formate-dependent phosphoribosylglycinamide formyltransferase">
    <location>
        <begin position="1"/>
        <end position="397"/>
    </location>
</feature>
<feature type="domain" description="ATP-grasp" evidence="1">
    <location>
        <begin position="119"/>
        <end position="312"/>
    </location>
</feature>
<feature type="binding site" evidence="1">
    <location>
        <begin position="22"/>
        <end position="23"/>
    </location>
    <ligand>
        <name>N(1)-(5-phospho-beta-D-ribosyl)glycinamide</name>
        <dbReference type="ChEBI" id="CHEBI:143788"/>
    </ligand>
</feature>
<feature type="binding site" evidence="1">
    <location>
        <position position="82"/>
    </location>
    <ligand>
        <name>N(1)-(5-phospho-beta-D-ribosyl)glycinamide</name>
        <dbReference type="ChEBI" id="CHEBI:143788"/>
    </ligand>
</feature>
<feature type="binding site" evidence="1">
    <location>
        <position position="114"/>
    </location>
    <ligand>
        <name>ATP</name>
        <dbReference type="ChEBI" id="CHEBI:30616"/>
    </ligand>
</feature>
<feature type="binding site" evidence="1">
    <location>
        <position position="155"/>
    </location>
    <ligand>
        <name>ATP</name>
        <dbReference type="ChEBI" id="CHEBI:30616"/>
    </ligand>
</feature>
<feature type="binding site" evidence="1">
    <location>
        <begin position="160"/>
        <end position="165"/>
    </location>
    <ligand>
        <name>ATP</name>
        <dbReference type="ChEBI" id="CHEBI:30616"/>
    </ligand>
</feature>
<feature type="binding site" evidence="1">
    <location>
        <begin position="195"/>
        <end position="198"/>
    </location>
    <ligand>
        <name>ATP</name>
        <dbReference type="ChEBI" id="CHEBI:30616"/>
    </ligand>
</feature>
<feature type="binding site" evidence="1">
    <location>
        <position position="203"/>
    </location>
    <ligand>
        <name>ATP</name>
        <dbReference type="ChEBI" id="CHEBI:30616"/>
    </ligand>
</feature>
<feature type="binding site" evidence="1">
    <location>
        <position position="271"/>
    </location>
    <ligand>
        <name>Mg(2+)</name>
        <dbReference type="ChEBI" id="CHEBI:18420"/>
    </ligand>
</feature>
<feature type="binding site" evidence="1">
    <location>
        <position position="283"/>
    </location>
    <ligand>
        <name>Mg(2+)</name>
        <dbReference type="ChEBI" id="CHEBI:18420"/>
    </ligand>
</feature>
<feature type="binding site" evidence="1">
    <location>
        <position position="290"/>
    </location>
    <ligand>
        <name>N(1)-(5-phospho-beta-D-ribosyl)glycinamide</name>
        <dbReference type="ChEBI" id="CHEBI:143788"/>
    </ligand>
</feature>
<feature type="binding site" evidence="1">
    <location>
        <position position="360"/>
    </location>
    <ligand>
        <name>N(1)-(5-phospho-beta-D-ribosyl)glycinamide</name>
        <dbReference type="ChEBI" id="CHEBI:143788"/>
    </ligand>
</feature>
<feature type="binding site" evidence="1">
    <location>
        <begin position="367"/>
        <end position="368"/>
    </location>
    <ligand>
        <name>N(1)-(5-phospho-beta-D-ribosyl)glycinamide</name>
        <dbReference type="ChEBI" id="CHEBI:143788"/>
    </ligand>
</feature>
<organism>
    <name type="scientific">Alcanivorax borkumensis (strain ATCC 700651 / DSM 11573 / NCIMB 13689 / SK2)</name>
    <dbReference type="NCBI Taxonomy" id="393595"/>
    <lineage>
        <taxon>Bacteria</taxon>
        <taxon>Pseudomonadati</taxon>
        <taxon>Pseudomonadota</taxon>
        <taxon>Gammaproteobacteria</taxon>
        <taxon>Oceanospirillales</taxon>
        <taxon>Alcanivoracaceae</taxon>
        <taxon>Alcanivorax</taxon>
    </lineage>
</organism>
<dbReference type="EC" id="6.3.1.21" evidence="1"/>
<dbReference type="EMBL" id="AM286690">
    <property type="protein sequence ID" value="CAL16268.1"/>
    <property type="molecule type" value="Genomic_DNA"/>
</dbReference>
<dbReference type="RefSeq" id="WP_011588104.1">
    <property type="nucleotide sequence ID" value="NC_008260.1"/>
</dbReference>
<dbReference type="SMR" id="Q0VRD0"/>
<dbReference type="STRING" id="393595.ABO_0820"/>
<dbReference type="KEGG" id="abo:ABO_0820"/>
<dbReference type="eggNOG" id="COG0027">
    <property type="taxonomic scope" value="Bacteria"/>
</dbReference>
<dbReference type="HOGENOM" id="CLU_011534_1_3_6"/>
<dbReference type="OrthoDB" id="9804625at2"/>
<dbReference type="UniPathway" id="UPA00074">
    <property type="reaction ID" value="UER00127"/>
</dbReference>
<dbReference type="Proteomes" id="UP000008871">
    <property type="component" value="Chromosome"/>
</dbReference>
<dbReference type="GO" id="GO:0005829">
    <property type="term" value="C:cytosol"/>
    <property type="evidence" value="ECO:0007669"/>
    <property type="project" value="TreeGrafter"/>
</dbReference>
<dbReference type="GO" id="GO:0005524">
    <property type="term" value="F:ATP binding"/>
    <property type="evidence" value="ECO:0007669"/>
    <property type="project" value="UniProtKB-UniRule"/>
</dbReference>
<dbReference type="GO" id="GO:0000287">
    <property type="term" value="F:magnesium ion binding"/>
    <property type="evidence" value="ECO:0007669"/>
    <property type="project" value="InterPro"/>
</dbReference>
<dbReference type="GO" id="GO:0043815">
    <property type="term" value="F:phosphoribosylglycinamide formyltransferase 2 activity"/>
    <property type="evidence" value="ECO:0007669"/>
    <property type="project" value="UniProtKB-UniRule"/>
</dbReference>
<dbReference type="GO" id="GO:0004644">
    <property type="term" value="F:phosphoribosylglycinamide formyltransferase activity"/>
    <property type="evidence" value="ECO:0007669"/>
    <property type="project" value="InterPro"/>
</dbReference>
<dbReference type="GO" id="GO:0006189">
    <property type="term" value="P:'de novo' IMP biosynthetic process"/>
    <property type="evidence" value="ECO:0007669"/>
    <property type="project" value="UniProtKB-UniRule"/>
</dbReference>
<dbReference type="FunFam" id="3.30.1490.20:FF:000013">
    <property type="entry name" value="Formate-dependent phosphoribosylglycinamide formyltransferase"/>
    <property type="match status" value="1"/>
</dbReference>
<dbReference type="FunFam" id="3.30.470.20:FF:000027">
    <property type="entry name" value="Formate-dependent phosphoribosylglycinamide formyltransferase"/>
    <property type="match status" value="1"/>
</dbReference>
<dbReference type="FunFam" id="3.40.50.20:FF:000007">
    <property type="entry name" value="Formate-dependent phosphoribosylglycinamide formyltransferase"/>
    <property type="match status" value="1"/>
</dbReference>
<dbReference type="Gene3D" id="3.40.50.20">
    <property type="match status" value="1"/>
</dbReference>
<dbReference type="Gene3D" id="3.30.1490.20">
    <property type="entry name" value="ATP-grasp fold, A domain"/>
    <property type="match status" value="1"/>
</dbReference>
<dbReference type="Gene3D" id="3.30.470.20">
    <property type="entry name" value="ATP-grasp fold, B domain"/>
    <property type="match status" value="1"/>
</dbReference>
<dbReference type="HAMAP" id="MF_01643">
    <property type="entry name" value="PurT"/>
    <property type="match status" value="1"/>
</dbReference>
<dbReference type="InterPro" id="IPR011761">
    <property type="entry name" value="ATP-grasp"/>
</dbReference>
<dbReference type="InterPro" id="IPR003135">
    <property type="entry name" value="ATP-grasp_carboxylate-amine"/>
</dbReference>
<dbReference type="InterPro" id="IPR013815">
    <property type="entry name" value="ATP_grasp_subdomain_1"/>
</dbReference>
<dbReference type="InterPro" id="IPR016185">
    <property type="entry name" value="PreATP-grasp_dom_sf"/>
</dbReference>
<dbReference type="InterPro" id="IPR005862">
    <property type="entry name" value="PurT"/>
</dbReference>
<dbReference type="InterPro" id="IPR054350">
    <property type="entry name" value="PurT/PurK_preATP-grasp"/>
</dbReference>
<dbReference type="InterPro" id="IPR048740">
    <property type="entry name" value="PurT_C"/>
</dbReference>
<dbReference type="InterPro" id="IPR011054">
    <property type="entry name" value="Rudment_hybrid_motif"/>
</dbReference>
<dbReference type="NCBIfam" id="NF006766">
    <property type="entry name" value="PRK09288.1"/>
    <property type="match status" value="1"/>
</dbReference>
<dbReference type="NCBIfam" id="TIGR01142">
    <property type="entry name" value="purT"/>
    <property type="match status" value="1"/>
</dbReference>
<dbReference type="PANTHER" id="PTHR43055">
    <property type="entry name" value="FORMATE-DEPENDENT PHOSPHORIBOSYLGLYCINAMIDE FORMYLTRANSFERASE"/>
    <property type="match status" value="1"/>
</dbReference>
<dbReference type="PANTHER" id="PTHR43055:SF1">
    <property type="entry name" value="FORMATE-DEPENDENT PHOSPHORIBOSYLGLYCINAMIDE FORMYLTRANSFERASE"/>
    <property type="match status" value="1"/>
</dbReference>
<dbReference type="Pfam" id="PF02222">
    <property type="entry name" value="ATP-grasp"/>
    <property type="match status" value="1"/>
</dbReference>
<dbReference type="Pfam" id="PF21244">
    <property type="entry name" value="PurT_C"/>
    <property type="match status" value="1"/>
</dbReference>
<dbReference type="Pfam" id="PF22660">
    <property type="entry name" value="RS_preATP-grasp-like"/>
    <property type="match status" value="1"/>
</dbReference>
<dbReference type="SUPFAM" id="SSF56059">
    <property type="entry name" value="Glutathione synthetase ATP-binding domain-like"/>
    <property type="match status" value="1"/>
</dbReference>
<dbReference type="SUPFAM" id="SSF52440">
    <property type="entry name" value="PreATP-grasp domain"/>
    <property type="match status" value="1"/>
</dbReference>
<dbReference type="SUPFAM" id="SSF51246">
    <property type="entry name" value="Rudiment single hybrid motif"/>
    <property type="match status" value="1"/>
</dbReference>
<dbReference type="PROSITE" id="PS50975">
    <property type="entry name" value="ATP_GRASP"/>
    <property type="match status" value="1"/>
</dbReference>
<protein>
    <recommendedName>
        <fullName evidence="1">Formate-dependent phosphoribosylglycinamide formyltransferase</fullName>
        <ecNumber evidence="1">6.3.1.21</ecNumber>
    </recommendedName>
    <alternativeName>
        <fullName evidence="1">5'-phosphoribosylglycinamide transformylase 2</fullName>
    </alternativeName>
    <alternativeName>
        <fullName evidence="1">Formate-dependent GAR transformylase</fullName>
    </alternativeName>
    <alternativeName>
        <fullName evidence="1">GAR transformylase 2</fullName>
        <shortName evidence="1">GART 2</shortName>
    </alternativeName>
    <alternativeName>
        <fullName evidence="1">Non-folate glycinamide ribonucleotide transformylase</fullName>
    </alternativeName>
    <alternativeName>
        <fullName evidence="1">Phosphoribosylglycinamide formyltransferase 2</fullName>
    </alternativeName>
</protein>
<keyword id="KW-0067">ATP-binding</keyword>
<keyword id="KW-0436">Ligase</keyword>
<keyword id="KW-0460">Magnesium</keyword>
<keyword id="KW-0479">Metal-binding</keyword>
<keyword id="KW-0547">Nucleotide-binding</keyword>
<keyword id="KW-0658">Purine biosynthesis</keyword>
<keyword id="KW-1185">Reference proteome</keyword>
<comment type="function">
    <text evidence="1">Involved in the de novo purine biosynthesis. Catalyzes the transfer of formate to 5-phospho-ribosyl-glycinamide (GAR), producing 5-phospho-ribosyl-N-formylglycinamide (FGAR). Formate is provided by PurU via hydrolysis of 10-formyl-tetrahydrofolate.</text>
</comment>
<comment type="catalytic activity">
    <reaction evidence="1">
        <text>N(1)-(5-phospho-beta-D-ribosyl)glycinamide + formate + ATP = N(2)-formyl-N(1)-(5-phospho-beta-D-ribosyl)glycinamide + ADP + phosphate + H(+)</text>
        <dbReference type="Rhea" id="RHEA:24829"/>
        <dbReference type="ChEBI" id="CHEBI:15378"/>
        <dbReference type="ChEBI" id="CHEBI:15740"/>
        <dbReference type="ChEBI" id="CHEBI:30616"/>
        <dbReference type="ChEBI" id="CHEBI:43474"/>
        <dbReference type="ChEBI" id="CHEBI:143788"/>
        <dbReference type="ChEBI" id="CHEBI:147286"/>
        <dbReference type="ChEBI" id="CHEBI:456216"/>
        <dbReference type="EC" id="6.3.1.21"/>
    </reaction>
    <physiologicalReaction direction="left-to-right" evidence="1">
        <dbReference type="Rhea" id="RHEA:24830"/>
    </physiologicalReaction>
</comment>
<comment type="pathway">
    <text evidence="1">Purine metabolism; IMP biosynthesis via de novo pathway; N(2)-formyl-N(1)-(5-phospho-D-ribosyl)glycinamide from N(1)-(5-phospho-D-ribosyl)glycinamide (formate route): step 1/1.</text>
</comment>
<comment type="subunit">
    <text evidence="1">Homodimer.</text>
</comment>
<comment type="similarity">
    <text evidence="1">Belongs to the PurK/PurT family.</text>
</comment>
<accession>Q0VRD0</accession>
<proteinExistence type="inferred from homology"/>
<reference key="1">
    <citation type="journal article" date="2006" name="Nat. Biotechnol.">
        <title>Genome sequence of the ubiquitous hydrocarbon-degrading marine bacterium Alcanivorax borkumensis.</title>
        <authorList>
            <person name="Schneiker S."/>
            <person name="Martins dos Santos V.A.P."/>
            <person name="Bartels D."/>
            <person name="Bekel T."/>
            <person name="Brecht M."/>
            <person name="Buhrmester J."/>
            <person name="Chernikova T.N."/>
            <person name="Denaro R."/>
            <person name="Ferrer M."/>
            <person name="Gertler C."/>
            <person name="Goesmann A."/>
            <person name="Golyshina O.V."/>
            <person name="Kaminski F."/>
            <person name="Khachane A.N."/>
            <person name="Lang S."/>
            <person name="Linke B."/>
            <person name="McHardy A.C."/>
            <person name="Meyer F."/>
            <person name="Nechitaylo T."/>
            <person name="Puehler A."/>
            <person name="Regenhardt D."/>
            <person name="Rupp O."/>
            <person name="Sabirova J.S."/>
            <person name="Selbitschka W."/>
            <person name="Yakimov M.M."/>
            <person name="Timmis K.N."/>
            <person name="Vorhoelter F.-J."/>
            <person name="Weidner S."/>
            <person name="Kaiser O."/>
            <person name="Golyshin P.N."/>
        </authorList>
    </citation>
    <scope>NUCLEOTIDE SEQUENCE [LARGE SCALE GENOMIC DNA]</scope>
    <source>
        <strain>ATCC 700651 / DSM 11573 / NCIMB 13689 / SK2</strain>
    </source>
</reference>
<evidence type="ECO:0000255" key="1">
    <source>
        <dbReference type="HAMAP-Rule" id="MF_01643"/>
    </source>
</evidence>
<name>PURT_ALCBS</name>
<gene>
    <name evidence="1" type="primary">purT</name>
    <name type="ordered locus">ABO_0820</name>
</gene>
<sequence>MTVIGTPFTDNATRVMLLGSGELGREVALELIRYGCEVIAVDRYAHAPAMQVAQHSHVINMLDGTALRAVVEQVKPALIVPEIEAIATDELVKLEAEGYTVVPTARAAQLTMNREGIRCLAAEELSLPTSPYRFADSLAGYQQAVREIGFPCVVKPVMSSSGKGQSTLKNEADILPAWEYAQSGGRAGKGRVIVEGFVDFDYEITLLTVRHKAGSEIKTSYCAPIGHRQENGDYQESWQPQPMSAAALQASREVALAITDALGGLGIFGVELFIKGDQVYFSEVSPRPHDTGLVTLISQTLSEFALHARAILGLPIPTIEQRGASASSVLLIQGQSEAMRYHGLNTALANADTEVRLFGKPDINGSRRLGVALAKADTIDAARDKANTAIAAFKVDL</sequence>